<keyword id="KW-0028">Amino-acid biosynthesis</keyword>
<keyword id="KW-0368">Histidine biosynthesis</keyword>
<keyword id="KW-0378">Hydrolase</keyword>
<keyword id="KW-0486">Methionine biosynthesis</keyword>
<keyword id="KW-0511">Multifunctional enzyme</keyword>
<keyword id="KW-0521">NADP</keyword>
<keyword id="KW-0554">One-carbon metabolism</keyword>
<keyword id="KW-0560">Oxidoreductase</keyword>
<keyword id="KW-0658">Purine biosynthesis</keyword>
<dbReference type="EC" id="1.5.1.5" evidence="1"/>
<dbReference type="EC" id="3.5.4.9" evidence="1"/>
<dbReference type="EMBL" id="BX572594">
    <property type="protein sequence ID" value="CAE25857.1"/>
    <property type="molecule type" value="Genomic_DNA"/>
</dbReference>
<dbReference type="RefSeq" id="WP_011155981.1">
    <property type="nucleotide sequence ID" value="NZ_CP116810.1"/>
</dbReference>
<dbReference type="SMR" id="Q6NCQ6"/>
<dbReference type="STRING" id="258594.RPA0413"/>
<dbReference type="GeneID" id="66891427"/>
<dbReference type="eggNOG" id="COG0190">
    <property type="taxonomic scope" value="Bacteria"/>
</dbReference>
<dbReference type="HOGENOM" id="CLU_034045_2_1_5"/>
<dbReference type="PhylomeDB" id="Q6NCQ6"/>
<dbReference type="UniPathway" id="UPA00193"/>
<dbReference type="GO" id="GO:0005829">
    <property type="term" value="C:cytosol"/>
    <property type="evidence" value="ECO:0007669"/>
    <property type="project" value="TreeGrafter"/>
</dbReference>
<dbReference type="GO" id="GO:0004477">
    <property type="term" value="F:methenyltetrahydrofolate cyclohydrolase activity"/>
    <property type="evidence" value="ECO:0007669"/>
    <property type="project" value="UniProtKB-UniRule"/>
</dbReference>
<dbReference type="GO" id="GO:0004488">
    <property type="term" value="F:methylenetetrahydrofolate dehydrogenase (NADP+) activity"/>
    <property type="evidence" value="ECO:0007669"/>
    <property type="project" value="UniProtKB-UniRule"/>
</dbReference>
<dbReference type="GO" id="GO:0000105">
    <property type="term" value="P:L-histidine biosynthetic process"/>
    <property type="evidence" value="ECO:0007669"/>
    <property type="project" value="UniProtKB-KW"/>
</dbReference>
<dbReference type="GO" id="GO:0009086">
    <property type="term" value="P:methionine biosynthetic process"/>
    <property type="evidence" value="ECO:0007669"/>
    <property type="project" value="UniProtKB-KW"/>
</dbReference>
<dbReference type="GO" id="GO:0006164">
    <property type="term" value="P:purine nucleotide biosynthetic process"/>
    <property type="evidence" value="ECO:0007669"/>
    <property type="project" value="UniProtKB-KW"/>
</dbReference>
<dbReference type="GO" id="GO:0035999">
    <property type="term" value="P:tetrahydrofolate interconversion"/>
    <property type="evidence" value="ECO:0007669"/>
    <property type="project" value="UniProtKB-UniRule"/>
</dbReference>
<dbReference type="CDD" id="cd01080">
    <property type="entry name" value="NAD_bind_m-THF_DH_Cyclohyd"/>
    <property type="match status" value="1"/>
</dbReference>
<dbReference type="FunFam" id="3.40.50.720:FF:000006">
    <property type="entry name" value="Bifunctional protein FolD"/>
    <property type="match status" value="1"/>
</dbReference>
<dbReference type="FunFam" id="3.40.50.10860:FF:000005">
    <property type="entry name" value="C-1-tetrahydrofolate synthase, cytoplasmic, putative"/>
    <property type="match status" value="1"/>
</dbReference>
<dbReference type="Gene3D" id="3.40.50.10860">
    <property type="entry name" value="Leucine Dehydrogenase, chain A, domain 1"/>
    <property type="match status" value="1"/>
</dbReference>
<dbReference type="Gene3D" id="3.40.50.720">
    <property type="entry name" value="NAD(P)-binding Rossmann-like Domain"/>
    <property type="match status" value="1"/>
</dbReference>
<dbReference type="HAMAP" id="MF_01576">
    <property type="entry name" value="THF_DHG_CYH"/>
    <property type="match status" value="1"/>
</dbReference>
<dbReference type="InterPro" id="IPR046346">
    <property type="entry name" value="Aminoacid_DH-like_N_sf"/>
</dbReference>
<dbReference type="InterPro" id="IPR036291">
    <property type="entry name" value="NAD(P)-bd_dom_sf"/>
</dbReference>
<dbReference type="InterPro" id="IPR000672">
    <property type="entry name" value="THF_DH/CycHdrlase"/>
</dbReference>
<dbReference type="InterPro" id="IPR020630">
    <property type="entry name" value="THF_DH/CycHdrlase_cat_dom"/>
</dbReference>
<dbReference type="InterPro" id="IPR020867">
    <property type="entry name" value="THF_DH/CycHdrlase_CS"/>
</dbReference>
<dbReference type="InterPro" id="IPR020631">
    <property type="entry name" value="THF_DH/CycHdrlase_NAD-bd_dom"/>
</dbReference>
<dbReference type="NCBIfam" id="NF010783">
    <property type="entry name" value="PRK14186.1"/>
    <property type="match status" value="1"/>
</dbReference>
<dbReference type="NCBIfam" id="NF010785">
    <property type="entry name" value="PRK14188.1"/>
    <property type="match status" value="1"/>
</dbReference>
<dbReference type="PANTHER" id="PTHR48099:SF5">
    <property type="entry name" value="C-1-TETRAHYDROFOLATE SYNTHASE, CYTOPLASMIC"/>
    <property type="match status" value="1"/>
</dbReference>
<dbReference type="PANTHER" id="PTHR48099">
    <property type="entry name" value="C-1-TETRAHYDROFOLATE SYNTHASE, CYTOPLASMIC-RELATED"/>
    <property type="match status" value="1"/>
</dbReference>
<dbReference type="Pfam" id="PF00763">
    <property type="entry name" value="THF_DHG_CYH"/>
    <property type="match status" value="1"/>
</dbReference>
<dbReference type="Pfam" id="PF02882">
    <property type="entry name" value="THF_DHG_CYH_C"/>
    <property type="match status" value="1"/>
</dbReference>
<dbReference type="PRINTS" id="PR00085">
    <property type="entry name" value="THFDHDRGNASE"/>
</dbReference>
<dbReference type="SUPFAM" id="SSF53223">
    <property type="entry name" value="Aminoacid dehydrogenase-like, N-terminal domain"/>
    <property type="match status" value="1"/>
</dbReference>
<dbReference type="SUPFAM" id="SSF51735">
    <property type="entry name" value="NAD(P)-binding Rossmann-fold domains"/>
    <property type="match status" value="1"/>
</dbReference>
<dbReference type="PROSITE" id="PS00766">
    <property type="entry name" value="THF_DHG_CYH_1"/>
    <property type="match status" value="1"/>
</dbReference>
<organism>
    <name type="scientific">Rhodopseudomonas palustris (strain ATCC BAA-98 / CGA009)</name>
    <dbReference type="NCBI Taxonomy" id="258594"/>
    <lineage>
        <taxon>Bacteria</taxon>
        <taxon>Pseudomonadati</taxon>
        <taxon>Pseudomonadota</taxon>
        <taxon>Alphaproteobacteria</taxon>
        <taxon>Hyphomicrobiales</taxon>
        <taxon>Nitrobacteraceae</taxon>
        <taxon>Rhodopseudomonas</taxon>
    </lineage>
</organism>
<proteinExistence type="inferred from homology"/>
<gene>
    <name evidence="1" type="primary">folD</name>
    <name type="ordered locus">RPA0413</name>
</gene>
<reference key="1">
    <citation type="journal article" date="2004" name="Nat. Biotechnol.">
        <title>Complete genome sequence of the metabolically versatile photosynthetic bacterium Rhodopseudomonas palustris.</title>
        <authorList>
            <person name="Larimer F.W."/>
            <person name="Chain P."/>
            <person name="Hauser L."/>
            <person name="Lamerdin J.E."/>
            <person name="Malfatti S."/>
            <person name="Do L."/>
            <person name="Land M.L."/>
            <person name="Pelletier D.A."/>
            <person name="Beatty J.T."/>
            <person name="Lang A.S."/>
            <person name="Tabita F.R."/>
            <person name="Gibson J.L."/>
            <person name="Hanson T.E."/>
            <person name="Bobst C."/>
            <person name="Torres y Torres J.L."/>
            <person name="Peres C."/>
            <person name="Harrison F.H."/>
            <person name="Gibson J."/>
            <person name="Harwood C.S."/>
        </authorList>
    </citation>
    <scope>NUCLEOTIDE SEQUENCE [LARGE SCALE GENOMIC DNA]</scope>
    <source>
        <strain>ATCC BAA-98 / CGA009</strain>
    </source>
</reference>
<feature type="chain" id="PRO_0000268474" description="Bifunctional protein FolD">
    <location>
        <begin position="1"/>
        <end position="295"/>
    </location>
</feature>
<feature type="binding site" evidence="1">
    <location>
        <begin position="166"/>
        <end position="168"/>
    </location>
    <ligand>
        <name>NADP(+)</name>
        <dbReference type="ChEBI" id="CHEBI:58349"/>
    </ligand>
</feature>
<feature type="binding site" evidence="1">
    <location>
        <position position="191"/>
    </location>
    <ligand>
        <name>NADP(+)</name>
        <dbReference type="ChEBI" id="CHEBI:58349"/>
    </ligand>
</feature>
<feature type="binding site" evidence="1">
    <location>
        <position position="232"/>
    </location>
    <ligand>
        <name>NADP(+)</name>
        <dbReference type="ChEBI" id="CHEBI:58349"/>
    </ligand>
</feature>
<protein>
    <recommendedName>
        <fullName evidence="1">Bifunctional protein FolD</fullName>
    </recommendedName>
    <domain>
        <recommendedName>
            <fullName evidence="1">Methylenetetrahydrofolate dehydrogenase</fullName>
            <ecNumber evidence="1">1.5.1.5</ecNumber>
        </recommendedName>
    </domain>
    <domain>
        <recommendedName>
            <fullName evidence="1">Methenyltetrahydrofolate cyclohydrolase</fullName>
            <ecNumber evidence="1">3.5.4.9</ecNumber>
        </recommendedName>
    </domain>
</protein>
<sequence length="295" mass="30537">MTARIIDGKTISAEVRARVAAEVTRLKTDHGITPGLAVVLVGNDPASEVYVRSKHKQTQEAGMASFEHRLPADVPQAELMALIAKLNADPAVHGILVQLPLPKGLDSNAVIDAIDPAKDVDGLNPTNAGRLASGLFALTPCTPLGSIIMAKTVHASLEGMNALVIGRSNLVGKPLVQLLLNENATVTIAHSRTRDLPALCRQADLVFAAVGKAEMVKGDWIKPGATVIDVGINRTPGKDGGKDKLLGDVAFAEAKEVAGAITPVPGGVGLMTVACLLVNTVRAACAIHGLPKPAV</sequence>
<comment type="function">
    <text evidence="1">Catalyzes the oxidation of 5,10-methylenetetrahydrofolate to 5,10-methenyltetrahydrofolate and then the hydrolysis of 5,10-methenyltetrahydrofolate to 10-formyltetrahydrofolate.</text>
</comment>
<comment type="catalytic activity">
    <reaction evidence="1">
        <text>(6R)-5,10-methylene-5,6,7,8-tetrahydrofolate + NADP(+) = (6R)-5,10-methenyltetrahydrofolate + NADPH</text>
        <dbReference type="Rhea" id="RHEA:22812"/>
        <dbReference type="ChEBI" id="CHEBI:15636"/>
        <dbReference type="ChEBI" id="CHEBI:57455"/>
        <dbReference type="ChEBI" id="CHEBI:57783"/>
        <dbReference type="ChEBI" id="CHEBI:58349"/>
        <dbReference type="EC" id="1.5.1.5"/>
    </reaction>
</comment>
<comment type="catalytic activity">
    <reaction evidence="1">
        <text>(6R)-5,10-methenyltetrahydrofolate + H2O = (6R)-10-formyltetrahydrofolate + H(+)</text>
        <dbReference type="Rhea" id="RHEA:23700"/>
        <dbReference type="ChEBI" id="CHEBI:15377"/>
        <dbReference type="ChEBI" id="CHEBI:15378"/>
        <dbReference type="ChEBI" id="CHEBI:57455"/>
        <dbReference type="ChEBI" id="CHEBI:195366"/>
        <dbReference type="EC" id="3.5.4.9"/>
    </reaction>
</comment>
<comment type="pathway">
    <text evidence="1">One-carbon metabolism; tetrahydrofolate interconversion.</text>
</comment>
<comment type="subunit">
    <text evidence="1">Homodimer.</text>
</comment>
<comment type="similarity">
    <text evidence="1">Belongs to the tetrahydrofolate dehydrogenase/cyclohydrolase family.</text>
</comment>
<accession>Q6NCQ6</accession>
<evidence type="ECO:0000255" key="1">
    <source>
        <dbReference type="HAMAP-Rule" id="MF_01576"/>
    </source>
</evidence>
<name>FOLD_RHOPA</name>